<name>AROE_BRUMB</name>
<evidence type="ECO:0000255" key="1">
    <source>
        <dbReference type="HAMAP-Rule" id="MF_00222"/>
    </source>
</evidence>
<protein>
    <recommendedName>
        <fullName evidence="1">Shikimate dehydrogenase (NADP(+))</fullName>
        <shortName evidence="1">SDH</shortName>
        <ecNumber evidence="1">1.1.1.25</ecNumber>
    </recommendedName>
</protein>
<proteinExistence type="inferred from homology"/>
<dbReference type="EC" id="1.1.1.25" evidence="1"/>
<dbReference type="EMBL" id="CP001488">
    <property type="protein sequence ID" value="ACO01779.1"/>
    <property type="molecule type" value="Genomic_DNA"/>
</dbReference>
<dbReference type="RefSeq" id="WP_002965133.1">
    <property type="nucleotide sequence ID" value="NC_012441.1"/>
</dbReference>
<dbReference type="SMR" id="C0RFV7"/>
<dbReference type="KEGG" id="bmi:BMEA_A2131"/>
<dbReference type="HOGENOM" id="CLU_044063_2_0_5"/>
<dbReference type="UniPathway" id="UPA00053">
    <property type="reaction ID" value="UER00087"/>
</dbReference>
<dbReference type="Proteomes" id="UP000001748">
    <property type="component" value="Chromosome I"/>
</dbReference>
<dbReference type="GO" id="GO:0005829">
    <property type="term" value="C:cytosol"/>
    <property type="evidence" value="ECO:0007669"/>
    <property type="project" value="TreeGrafter"/>
</dbReference>
<dbReference type="GO" id="GO:0050661">
    <property type="term" value="F:NADP binding"/>
    <property type="evidence" value="ECO:0007669"/>
    <property type="project" value="InterPro"/>
</dbReference>
<dbReference type="GO" id="GO:0004764">
    <property type="term" value="F:shikimate 3-dehydrogenase (NADP+) activity"/>
    <property type="evidence" value="ECO:0007669"/>
    <property type="project" value="UniProtKB-UniRule"/>
</dbReference>
<dbReference type="GO" id="GO:0008652">
    <property type="term" value="P:amino acid biosynthetic process"/>
    <property type="evidence" value="ECO:0007669"/>
    <property type="project" value="UniProtKB-KW"/>
</dbReference>
<dbReference type="GO" id="GO:0009073">
    <property type="term" value="P:aromatic amino acid family biosynthetic process"/>
    <property type="evidence" value="ECO:0007669"/>
    <property type="project" value="UniProtKB-KW"/>
</dbReference>
<dbReference type="GO" id="GO:0009423">
    <property type="term" value="P:chorismate biosynthetic process"/>
    <property type="evidence" value="ECO:0007669"/>
    <property type="project" value="UniProtKB-UniRule"/>
</dbReference>
<dbReference type="GO" id="GO:0019632">
    <property type="term" value="P:shikimate metabolic process"/>
    <property type="evidence" value="ECO:0007669"/>
    <property type="project" value="InterPro"/>
</dbReference>
<dbReference type="CDD" id="cd01065">
    <property type="entry name" value="NAD_bind_Shikimate_DH"/>
    <property type="match status" value="1"/>
</dbReference>
<dbReference type="Gene3D" id="3.40.50.10860">
    <property type="entry name" value="Leucine Dehydrogenase, chain A, domain 1"/>
    <property type="match status" value="1"/>
</dbReference>
<dbReference type="Gene3D" id="3.40.50.720">
    <property type="entry name" value="NAD(P)-binding Rossmann-like Domain"/>
    <property type="match status" value="1"/>
</dbReference>
<dbReference type="HAMAP" id="MF_00222">
    <property type="entry name" value="Shikimate_DH_AroE"/>
    <property type="match status" value="1"/>
</dbReference>
<dbReference type="InterPro" id="IPR046346">
    <property type="entry name" value="Aminoacid_DH-like_N_sf"/>
</dbReference>
<dbReference type="InterPro" id="IPR036291">
    <property type="entry name" value="NAD(P)-bd_dom_sf"/>
</dbReference>
<dbReference type="InterPro" id="IPR041121">
    <property type="entry name" value="SDH_C"/>
</dbReference>
<dbReference type="InterPro" id="IPR011342">
    <property type="entry name" value="Shikimate_DH"/>
</dbReference>
<dbReference type="InterPro" id="IPR013708">
    <property type="entry name" value="Shikimate_DH-bd_N"/>
</dbReference>
<dbReference type="InterPro" id="IPR022893">
    <property type="entry name" value="Shikimate_DH_fam"/>
</dbReference>
<dbReference type="InterPro" id="IPR006151">
    <property type="entry name" value="Shikm_DH/Glu-tRNA_Rdtase"/>
</dbReference>
<dbReference type="NCBIfam" id="TIGR00507">
    <property type="entry name" value="aroE"/>
    <property type="match status" value="1"/>
</dbReference>
<dbReference type="NCBIfam" id="NF001312">
    <property type="entry name" value="PRK00258.1-4"/>
    <property type="match status" value="1"/>
</dbReference>
<dbReference type="PANTHER" id="PTHR21089:SF1">
    <property type="entry name" value="BIFUNCTIONAL 3-DEHYDROQUINATE DEHYDRATASE_SHIKIMATE DEHYDROGENASE, CHLOROPLASTIC"/>
    <property type="match status" value="1"/>
</dbReference>
<dbReference type="PANTHER" id="PTHR21089">
    <property type="entry name" value="SHIKIMATE DEHYDROGENASE"/>
    <property type="match status" value="1"/>
</dbReference>
<dbReference type="Pfam" id="PF18317">
    <property type="entry name" value="SDH_C"/>
    <property type="match status" value="1"/>
</dbReference>
<dbReference type="Pfam" id="PF01488">
    <property type="entry name" value="Shikimate_DH"/>
    <property type="match status" value="1"/>
</dbReference>
<dbReference type="Pfam" id="PF08501">
    <property type="entry name" value="Shikimate_dh_N"/>
    <property type="match status" value="1"/>
</dbReference>
<dbReference type="SUPFAM" id="SSF53223">
    <property type="entry name" value="Aminoacid dehydrogenase-like, N-terminal domain"/>
    <property type="match status" value="1"/>
</dbReference>
<dbReference type="SUPFAM" id="SSF51735">
    <property type="entry name" value="NAD(P)-binding Rossmann-fold domains"/>
    <property type="match status" value="1"/>
</dbReference>
<keyword id="KW-0028">Amino-acid biosynthesis</keyword>
<keyword id="KW-0057">Aromatic amino acid biosynthesis</keyword>
<keyword id="KW-0521">NADP</keyword>
<keyword id="KW-0560">Oxidoreductase</keyword>
<feature type="chain" id="PRO_1000124876" description="Shikimate dehydrogenase (NADP(+))">
    <location>
        <begin position="1"/>
        <end position="289"/>
    </location>
</feature>
<feature type="active site" description="Proton acceptor" evidence="1">
    <location>
        <position position="73"/>
    </location>
</feature>
<feature type="binding site" evidence="1">
    <location>
        <begin position="22"/>
        <end position="24"/>
    </location>
    <ligand>
        <name>shikimate</name>
        <dbReference type="ChEBI" id="CHEBI:36208"/>
    </ligand>
</feature>
<feature type="binding site" evidence="1">
    <location>
        <position position="69"/>
    </location>
    <ligand>
        <name>shikimate</name>
        <dbReference type="ChEBI" id="CHEBI:36208"/>
    </ligand>
</feature>
<feature type="binding site" evidence="1">
    <location>
        <position position="85"/>
    </location>
    <ligand>
        <name>NADP(+)</name>
        <dbReference type="ChEBI" id="CHEBI:58349"/>
    </ligand>
</feature>
<feature type="binding site" evidence="1">
    <location>
        <position position="94"/>
    </location>
    <ligand>
        <name>shikimate</name>
        <dbReference type="ChEBI" id="CHEBI:36208"/>
    </ligand>
</feature>
<feature type="binding site" evidence="1">
    <location>
        <position position="109"/>
    </location>
    <ligand>
        <name>shikimate</name>
        <dbReference type="ChEBI" id="CHEBI:36208"/>
    </ligand>
</feature>
<feature type="binding site" evidence="1">
    <location>
        <begin position="134"/>
        <end position="138"/>
    </location>
    <ligand>
        <name>NADP(+)</name>
        <dbReference type="ChEBI" id="CHEBI:58349"/>
    </ligand>
</feature>
<feature type="binding site" evidence="1">
    <location>
        <begin position="158"/>
        <end position="163"/>
    </location>
    <ligand>
        <name>NADP(+)</name>
        <dbReference type="ChEBI" id="CHEBI:58349"/>
    </ligand>
</feature>
<feature type="binding site" evidence="1">
    <location>
        <position position="226"/>
    </location>
    <ligand>
        <name>NADP(+)</name>
        <dbReference type="ChEBI" id="CHEBI:58349"/>
    </ligand>
</feature>
<feature type="binding site" evidence="1">
    <location>
        <position position="228"/>
    </location>
    <ligand>
        <name>shikimate</name>
        <dbReference type="ChEBI" id="CHEBI:36208"/>
    </ligand>
</feature>
<feature type="binding site" evidence="1">
    <location>
        <position position="249"/>
    </location>
    <ligand>
        <name>NADP(+)</name>
        <dbReference type="ChEBI" id="CHEBI:58349"/>
    </ligand>
</feature>
<sequence>MDDKSMARGRKAFVTGFPIRHSRSPLIHGFWLKELGIDGSYEAVEVKPEDFSSFAASLAANGFAGGNVTIPHKEAAYAAAESLDEAARAIGAVNTLWLENGRLCGGNTDAYGFAANLDASAPGWDKADRALVLGAGGASRAVVHALLSRGVCHVSVVNRTLSRAEELAAHFGARVYAHGWDEAQALVSNAGLIVNTTALGMSGHGEGQDFPIDLTCAPKEAVATDIVYVPLRTAFLNKAEKAGLKTVDGLGMLLHQAVPGFERWFGQRPQVTQALREHILADMAKAGAL</sequence>
<gene>
    <name evidence="1" type="primary">aroE</name>
    <name type="ordered locus">BMEA_A2131</name>
</gene>
<reference key="1">
    <citation type="submission" date="2009-03" db="EMBL/GenBank/DDBJ databases">
        <title>Brucella melitensis ATCC 23457 whole genome shotgun sequencing project.</title>
        <authorList>
            <person name="Setubal J.C."/>
            <person name="Boyle S."/>
            <person name="Crasta O.R."/>
            <person name="Gillespie J.J."/>
            <person name="Kenyon R.W."/>
            <person name="Lu J."/>
            <person name="Mane S."/>
            <person name="Nagrani S."/>
            <person name="Shallom J.M."/>
            <person name="Shallom S."/>
            <person name="Shukla M."/>
            <person name="Snyder E.E."/>
            <person name="Sobral B.W."/>
            <person name="Wattam A.R."/>
            <person name="Will R."/>
            <person name="Williams K."/>
            <person name="Yoo H."/>
            <person name="Munk C."/>
            <person name="Tapia R."/>
            <person name="Han C."/>
            <person name="Detter J.C."/>
            <person name="Bruce D."/>
            <person name="Brettin T.S."/>
        </authorList>
    </citation>
    <scope>NUCLEOTIDE SEQUENCE [LARGE SCALE GENOMIC DNA]</scope>
    <source>
        <strain>ATCC 23457</strain>
    </source>
</reference>
<accession>C0RFV7</accession>
<comment type="function">
    <text evidence="1">Involved in the biosynthesis of the chorismate, which leads to the biosynthesis of aromatic amino acids. Catalyzes the reversible NADPH linked reduction of 3-dehydroshikimate (DHSA) to yield shikimate (SA).</text>
</comment>
<comment type="catalytic activity">
    <reaction evidence="1">
        <text>shikimate + NADP(+) = 3-dehydroshikimate + NADPH + H(+)</text>
        <dbReference type="Rhea" id="RHEA:17737"/>
        <dbReference type="ChEBI" id="CHEBI:15378"/>
        <dbReference type="ChEBI" id="CHEBI:16630"/>
        <dbReference type="ChEBI" id="CHEBI:36208"/>
        <dbReference type="ChEBI" id="CHEBI:57783"/>
        <dbReference type="ChEBI" id="CHEBI:58349"/>
        <dbReference type="EC" id="1.1.1.25"/>
    </reaction>
</comment>
<comment type="pathway">
    <text evidence="1">Metabolic intermediate biosynthesis; chorismate biosynthesis; chorismate from D-erythrose 4-phosphate and phosphoenolpyruvate: step 4/7.</text>
</comment>
<comment type="subunit">
    <text evidence="1">Homodimer.</text>
</comment>
<comment type="similarity">
    <text evidence="1">Belongs to the shikimate dehydrogenase family.</text>
</comment>
<organism>
    <name type="scientific">Brucella melitensis biotype 2 (strain ATCC 23457)</name>
    <dbReference type="NCBI Taxonomy" id="546272"/>
    <lineage>
        <taxon>Bacteria</taxon>
        <taxon>Pseudomonadati</taxon>
        <taxon>Pseudomonadota</taxon>
        <taxon>Alphaproteobacteria</taxon>
        <taxon>Hyphomicrobiales</taxon>
        <taxon>Brucellaceae</taxon>
        <taxon>Brucella/Ochrobactrum group</taxon>
        <taxon>Brucella</taxon>
    </lineage>
</organism>